<reference key="1">
    <citation type="journal article" date="1995" name="Gene">
        <title>Structure and gene expression of avian cyclin D2.</title>
        <authorList>
            <person name="Li H."/>
            <person name="Grenet J."/>
            <person name="Kidd V.J."/>
        </authorList>
    </citation>
    <scope>NUCLEOTIDE SEQUENCE [GENOMIC DNA]</scope>
</reference>
<proteinExistence type="inferred from homology"/>
<sequence>MELLCCEVDPMRRALPDPNLLYDDRVLHNLLTIEERYLPQCSYFKCVQKDIQPFMRRMVATWMLEVCEEQKCEEEVFPLAMNYLDRFLAVVPTRKCHLQLLGAVCMFLASKLKETIPLTAEKLCIYTDNSIKPQELLEWELVVLGKLKWNLAAVTPHDFIEHILRKLPLPKDKLVLIRKHAQTFIALCATDFNFAMYPPSMIATGSVGAAICGLQLDDGDRSLSGDSLTDFLAKITSTDVDCLKACQEQIESVLVSNLRQVRQQQQQSNPSKTIEELDQASTPTDVRDINL</sequence>
<gene>
    <name type="primary">CCND2</name>
</gene>
<feature type="chain" id="PRO_0000080440" description="G1/S-specific cyclin-D2">
    <location>
        <begin position="1"/>
        <end position="291"/>
    </location>
</feature>
<feature type="region of interest" description="Disordered" evidence="4">
    <location>
        <begin position="264"/>
        <end position="291"/>
    </location>
</feature>
<feature type="modified residue" description="Phosphothreonine" evidence="3">
    <location>
        <position position="282"/>
    </location>
</feature>
<comment type="function">
    <text evidence="2">Regulatory component of the cyclin D2-CDK4 (DC) complex that phosphorylates and inhibits members of the retinoblastoma (RB) protein family including RB1 and regulates the cell-cycle during G(1)/S transition. Phosphorylation of RB1 allows dissociation of the transcription factor E2F from the RB/E2F complex and the subsequent transcription of E2F target genes which are responsible for the progression through the G(1) phase. Hypophosphorylates RB1 in early G(1) phase. Cyclin D-CDK4 complexes are major integrators of various mitogenenic and antimitogenic signals.</text>
</comment>
<comment type="subunit">
    <text evidence="2">Interacts with the CDK4 and CDK6 protein kinases to form a serine/threonine kinase holoenzyme complex. The cyclin subunit imparts substrate specificity to the complex.</text>
</comment>
<comment type="subcellular location">
    <subcellularLocation>
        <location evidence="2">Nucleus</location>
    </subcellularLocation>
    <subcellularLocation>
        <location evidence="2">Cytoplasm</location>
    </subcellularLocation>
    <subcellularLocation>
        <location evidence="2">Nucleus membrane</location>
    </subcellularLocation>
    <text evidence="2">Cyclin D-CDK4 complexes accumulate at the nuclear membrane and are then translocated into the nucleus through interaction with KIP/CIP family members.</text>
</comment>
<comment type="PTM">
    <text evidence="1">Phosphorylation at Thr-282 by MAP kinases is required for ubiquitination and degradation by the DCX(AMBRA1) complex.</text>
</comment>
<comment type="PTM">
    <text evidence="3">Ubiquitinated by the DCX(AMBRA1) complex during the transition from G1 to S cell phase, leading to its degradation: ubiquitination is dependent on Thr-282 phosphorylation. The DCX(AMBRA1) complex represents the major regulator of CCND2 stability during the G1/S transition.</text>
</comment>
<comment type="similarity">
    <text evidence="5">Belongs to the cyclin family. Cyclin D subfamily.</text>
</comment>
<keyword id="KW-0131">Cell cycle</keyword>
<keyword id="KW-0132">Cell division</keyword>
<keyword id="KW-0195">Cyclin</keyword>
<keyword id="KW-0963">Cytoplasm</keyword>
<keyword id="KW-0472">Membrane</keyword>
<keyword id="KW-0539">Nucleus</keyword>
<keyword id="KW-0597">Phosphoprotein</keyword>
<keyword id="KW-1185">Reference proteome</keyword>
<keyword id="KW-0832">Ubl conjugation</keyword>
<name>CCND2_CHICK</name>
<evidence type="ECO:0000250" key="1">
    <source>
        <dbReference type="UniProtKB" id="P24385"/>
    </source>
</evidence>
<evidence type="ECO:0000250" key="2">
    <source>
        <dbReference type="UniProtKB" id="P30279"/>
    </source>
</evidence>
<evidence type="ECO:0000250" key="3">
    <source>
        <dbReference type="UniProtKB" id="P30280"/>
    </source>
</evidence>
<evidence type="ECO:0000256" key="4">
    <source>
        <dbReference type="SAM" id="MobiDB-lite"/>
    </source>
</evidence>
<evidence type="ECO:0000305" key="5"/>
<accession>P49706</accession>
<protein>
    <recommendedName>
        <fullName>G1/S-specific cyclin-D2</fullName>
    </recommendedName>
</protein>
<organism>
    <name type="scientific">Gallus gallus</name>
    <name type="common">Chicken</name>
    <dbReference type="NCBI Taxonomy" id="9031"/>
    <lineage>
        <taxon>Eukaryota</taxon>
        <taxon>Metazoa</taxon>
        <taxon>Chordata</taxon>
        <taxon>Craniata</taxon>
        <taxon>Vertebrata</taxon>
        <taxon>Euteleostomi</taxon>
        <taxon>Archelosauria</taxon>
        <taxon>Archosauria</taxon>
        <taxon>Dinosauria</taxon>
        <taxon>Saurischia</taxon>
        <taxon>Theropoda</taxon>
        <taxon>Coelurosauria</taxon>
        <taxon>Aves</taxon>
        <taxon>Neognathae</taxon>
        <taxon>Galloanserae</taxon>
        <taxon>Galliformes</taxon>
        <taxon>Phasianidae</taxon>
        <taxon>Phasianinae</taxon>
        <taxon>Gallus</taxon>
    </lineage>
</organism>
<dbReference type="EMBL" id="U28980">
    <property type="protein sequence ID" value="AAA96955.1"/>
    <property type="molecule type" value="Genomic_DNA"/>
</dbReference>
<dbReference type="PIR" id="JC4579">
    <property type="entry name" value="JC4579"/>
</dbReference>
<dbReference type="RefSeq" id="NP_001384805.1">
    <property type="nucleotide sequence ID" value="NM_001397876.1"/>
</dbReference>
<dbReference type="RefSeq" id="NP_989544.1">
    <property type="nucleotide sequence ID" value="NM_204213.2"/>
</dbReference>
<dbReference type="RefSeq" id="XP_015147604.1">
    <property type="nucleotide sequence ID" value="XM_015292118.1"/>
</dbReference>
<dbReference type="SMR" id="P49706"/>
<dbReference type="FunCoup" id="P49706">
    <property type="interactions" value="477"/>
</dbReference>
<dbReference type="STRING" id="9031.ENSGALP00000027885"/>
<dbReference type="PaxDb" id="9031-ENSGALP00000027885"/>
<dbReference type="Ensembl" id="ENSGALT00010059249.1">
    <property type="protein sequence ID" value="ENSGALP00010036169.1"/>
    <property type="gene ID" value="ENSGALG00010024285.1"/>
</dbReference>
<dbReference type="GeneID" id="374047"/>
<dbReference type="KEGG" id="gga:374047"/>
<dbReference type="CTD" id="894"/>
<dbReference type="VEuPathDB" id="HostDB:geneid_374047"/>
<dbReference type="eggNOG" id="KOG0656">
    <property type="taxonomic scope" value="Eukaryota"/>
</dbReference>
<dbReference type="GeneTree" id="ENSGT00940000155180"/>
<dbReference type="HOGENOM" id="CLU_052190_0_0_1"/>
<dbReference type="InParanoid" id="P49706"/>
<dbReference type="OMA" id="CLEMDTN"/>
<dbReference type="OrthoDB" id="306099at2759"/>
<dbReference type="PhylomeDB" id="P49706"/>
<dbReference type="Reactome" id="R-GGA-69231">
    <property type="pathway name" value="Cyclin D associated events in G1"/>
</dbReference>
<dbReference type="Reactome" id="R-GGA-8934593">
    <property type="pathway name" value="Regulation of RUNX1 Expression and Activity"/>
</dbReference>
<dbReference type="Reactome" id="R-GGA-9754119">
    <property type="pathway name" value="Drug-mediated inhibition of CDK4/CDK6 activity"/>
</dbReference>
<dbReference type="PRO" id="PR:P49706"/>
<dbReference type="Proteomes" id="UP000000539">
    <property type="component" value="Chromosome 1"/>
</dbReference>
<dbReference type="Bgee" id="ENSGALG00000017283">
    <property type="expression patterns" value="Expressed in spleen and 12 other cell types or tissues"/>
</dbReference>
<dbReference type="GO" id="GO:0000307">
    <property type="term" value="C:cyclin-dependent protein kinase holoenzyme complex"/>
    <property type="evidence" value="ECO:0000318"/>
    <property type="project" value="GO_Central"/>
</dbReference>
<dbReference type="GO" id="GO:0005737">
    <property type="term" value="C:cytoplasm"/>
    <property type="evidence" value="ECO:0000318"/>
    <property type="project" value="GO_Central"/>
</dbReference>
<dbReference type="GO" id="GO:0005815">
    <property type="term" value="C:microtubule organizing center"/>
    <property type="evidence" value="ECO:0000318"/>
    <property type="project" value="GO_Central"/>
</dbReference>
<dbReference type="GO" id="GO:0031965">
    <property type="term" value="C:nuclear membrane"/>
    <property type="evidence" value="ECO:0007669"/>
    <property type="project" value="UniProtKB-SubCell"/>
</dbReference>
<dbReference type="GO" id="GO:0005634">
    <property type="term" value="C:nucleus"/>
    <property type="evidence" value="ECO:0000318"/>
    <property type="project" value="GO_Central"/>
</dbReference>
<dbReference type="GO" id="GO:0016538">
    <property type="term" value="F:cyclin-dependent protein serine/threonine kinase regulator activity"/>
    <property type="evidence" value="ECO:0000318"/>
    <property type="project" value="GO_Central"/>
</dbReference>
<dbReference type="GO" id="GO:0051301">
    <property type="term" value="P:cell division"/>
    <property type="evidence" value="ECO:0007669"/>
    <property type="project" value="UniProtKB-KW"/>
</dbReference>
<dbReference type="GO" id="GO:0000082">
    <property type="term" value="P:G1/S transition of mitotic cell cycle"/>
    <property type="evidence" value="ECO:0000318"/>
    <property type="project" value="GO_Central"/>
</dbReference>
<dbReference type="GO" id="GO:1900087">
    <property type="term" value="P:positive regulation of G1/S transition of mitotic cell cycle"/>
    <property type="evidence" value="ECO:0000318"/>
    <property type="project" value="GO_Central"/>
</dbReference>
<dbReference type="CDD" id="cd20574">
    <property type="entry name" value="CYCLIN_CCND2_rpt1"/>
    <property type="match status" value="1"/>
</dbReference>
<dbReference type="CDD" id="cd20577">
    <property type="entry name" value="CYCLIN_CCND2_rpt2"/>
    <property type="match status" value="1"/>
</dbReference>
<dbReference type="FunFam" id="1.10.472.10:FF:000012">
    <property type="entry name" value="G1/S-specific cyclin-D1"/>
    <property type="match status" value="1"/>
</dbReference>
<dbReference type="FunFam" id="1.10.472.10:FF:000120">
    <property type="entry name" value="G1/S-specific cyclin-D1"/>
    <property type="match status" value="1"/>
</dbReference>
<dbReference type="Gene3D" id="1.10.472.10">
    <property type="entry name" value="Cyclin-like"/>
    <property type="match status" value="2"/>
</dbReference>
<dbReference type="InterPro" id="IPR039361">
    <property type="entry name" value="Cyclin"/>
</dbReference>
<dbReference type="InterPro" id="IPR013763">
    <property type="entry name" value="Cyclin-like_dom"/>
</dbReference>
<dbReference type="InterPro" id="IPR036915">
    <property type="entry name" value="Cyclin-like_sf"/>
</dbReference>
<dbReference type="InterPro" id="IPR004367">
    <property type="entry name" value="Cyclin_C-dom"/>
</dbReference>
<dbReference type="InterPro" id="IPR006671">
    <property type="entry name" value="Cyclin_N"/>
</dbReference>
<dbReference type="InterPro" id="IPR048258">
    <property type="entry name" value="Cyclins_cyclin-box"/>
</dbReference>
<dbReference type="PANTHER" id="PTHR10177">
    <property type="entry name" value="CYCLINS"/>
    <property type="match status" value="1"/>
</dbReference>
<dbReference type="Pfam" id="PF02984">
    <property type="entry name" value="Cyclin_C"/>
    <property type="match status" value="1"/>
</dbReference>
<dbReference type="Pfam" id="PF00134">
    <property type="entry name" value="Cyclin_N"/>
    <property type="match status" value="1"/>
</dbReference>
<dbReference type="SMART" id="SM00385">
    <property type="entry name" value="CYCLIN"/>
    <property type="match status" value="1"/>
</dbReference>
<dbReference type="SMART" id="SM01332">
    <property type="entry name" value="Cyclin_C"/>
    <property type="match status" value="1"/>
</dbReference>
<dbReference type="SUPFAM" id="SSF47954">
    <property type="entry name" value="Cyclin-like"/>
    <property type="match status" value="2"/>
</dbReference>
<dbReference type="PROSITE" id="PS00292">
    <property type="entry name" value="CYCLINS"/>
    <property type="match status" value="1"/>
</dbReference>